<reference key="1">
    <citation type="journal article" date="2010" name="PLoS ONE">
        <title>The complete multipartite genome sequence of Cupriavidus necator JMP134, a versatile pollutant degrader.</title>
        <authorList>
            <person name="Lykidis A."/>
            <person name="Perez-Pantoja D."/>
            <person name="Ledger T."/>
            <person name="Mavromatis K."/>
            <person name="Anderson I.J."/>
            <person name="Ivanova N.N."/>
            <person name="Hooper S.D."/>
            <person name="Lapidus A."/>
            <person name="Lucas S."/>
            <person name="Gonzalez B."/>
            <person name="Kyrpides N.C."/>
        </authorList>
    </citation>
    <scope>NUCLEOTIDE SEQUENCE [LARGE SCALE GENOMIC DNA]</scope>
    <source>
        <strain>JMP134 / LMG 1197</strain>
    </source>
</reference>
<feature type="chain" id="PRO_1000016972" description="Ribose-5-phosphate isomerase A">
    <location>
        <begin position="1"/>
        <end position="228"/>
    </location>
</feature>
<feature type="active site" description="Proton acceptor" evidence="1">
    <location>
        <position position="107"/>
    </location>
</feature>
<feature type="binding site" evidence="1">
    <location>
        <begin position="32"/>
        <end position="35"/>
    </location>
    <ligand>
        <name>substrate</name>
    </ligand>
</feature>
<feature type="binding site" evidence="1">
    <location>
        <begin position="85"/>
        <end position="88"/>
    </location>
    <ligand>
        <name>substrate</name>
    </ligand>
</feature>
<feature type="binding site" evidence="1">
    <location>
        <begin position="98"/>
        <end position="101"/>
    </location>
    <ligand>
        <name>substrate</name>
    </ligand>
</feature>
<feature type="binding site" evidence="1">
    <location>
        <position position="125"/>
    </location>
    <ligand>
        <name>substrate</name>
    </ligand>
</feature>
<gene>
    <name evidence="1" type="primary">rpiA</name>
    <name type="ordered locus">Reut_A2068</name>
</gene>
<organism>
    <name type="scientific">Cupriavidus pinatubonensis (strain JMP 134 / LMG 1197)</name>
    <name type="common">Cupriavidus necator (strain JMP 134)</name>
    <dbReference type="NCBI Taxonomy" id="264198"/>
    <lineage>
        <taxon>Bacteria</taxon>
        <taxon>Pseudomonadati</taxon>
        <taxon>Pseudomonadota</taxon>
        <taxon>Betaproteobacteria</taxon>
        <taxon>Burkholderiales</taxon>
        <taxon>Burkholderiaceae</taxon>
        <taxon>Cupriavidus</taxon>
    </lineage>
</organism>
<sequence length="228" mass="23712">MTQDELKALVAQAAADYVKQEVPEGAVLGVGTGSTANLFIDAVAAFKDRFAGAVSSSEASTRRLQQHGFKVLDLNEVDDIPVYVDGADEIDASGAMIKGGGGALTREKIVASVAGRFVCIADGSKLVETMGAFPLPVEVIPMARAAVARQVAALGGQPRLRMNKDGGIYKTDNGNVILDVSGLKITDPRGLEQSINQIPGVVTVGLFALRGANVLLLGTGEGVQRTDY</sequence>
<keyword id="KW-0413">Isomerase</keyword>
<dbReference type="EC" id="5.3.1.6" evidence="1"/>
<dbReference type="EMBL" id="CP000090">
    <property type="protein sequence ID" value="AAZ61432.1"/>
    <property type="molecule type" value="Genomic_DNA"/>
</dbReference>
<dbReference type="SMR" id="Q46ZK1"/>
<dbReference type="STRING" id="264198.Reut_A2068"/>
<dbReference type="KEGG" id="reu:Reut_A2068"/>
<dbReference type="eggNOG" id="COG0120">
    <property type="taxonomic scope" value="Bacteria"/>
</dbReference>
<dbReference type="HOGENOM" id="CLU_056590_1_1_4"/>
<dbReference type="OrthoDB" id="5870696at2"/>
<dbReference type="UniPathway" id="UPA00115">
    <property type="reaction ID" value="UER00412"/>
</dbReference>
<dbReference type="GO" id="GO:0005829">
    <property type="term" value="C:cytosol"/>
    <property type="evidence" value="ECO:0007669"/>
    <property type="project" value="TreeGrafter"/>
</dbReference>
<dbReference type="GO" id="GO:0004751">
    <property type="term" value="F:ribose-5-phosphate isomerase activity"/>
    <property type="evidence" value="ECO:0007669"/>
    <property type="project" value="UniProtKB-UniRule"/>
</dbReference>
<dbReference type="GO" id="GO:0006014">
    <property type="term" value="P:D-ribose metabolic process"/>
    <property type="evidence" value="ECO:0007669"/>
    <property type="project" value="TreeGrafter"/>
</dbReference>
<dbReference type="GO" id="GO:0009052">
    <property type="term" value="P:pentose-phosphate shunt, non-oxidative branch"/>
    <property type="evidence" value="ECO:0007669"/>
    <property type="project" value="UniProtKB-UniRule"/>
</dbReference>
<dbReference type="CDD" id="cd01398">
    <property type="entry name" value="RPI_A"/>
    <property type="match status" value="1"/>
</dbReference>
<dbReference type="FunFam" id="3.40.50.1360:FF:000001">
    <property type="entry name" value="Ribose-5-phosphate isomerase A"/>
    <property type="match status" value="1"/>
</dbReference>
<dbReference type="Gene3D" id="3.30.70.260">
    <property type="match status" value="1"/>
</dbReference>
<dbReference type="Gene3D" id="3.40.50.1360">
    <property type="match status" value="1"/>
</dbReference>
<dbReference type="HAMAP" id="MF_00170">
    <property type="entry name" value="Rib_5P_isom_A"/>
    <property type="match status" value="1"/>
</dbReference>
<dbReference type="InterPro" id="IPR037171">
    <property type="entry name" value="NagB/RpiA_transferase-like"/>
</dbReference>
<dbReference type="InterPro" id="IPR020672">
    <property type="entry name" value="Ribose5P_isomerase_typA_subgr"/>
</dbReference>
<dbReference type="InterPro" id="IPR004788">
    <property type="entry name" value="Ribose5P_isomerase_type_A"/>
</dbReference>
<dbReference type="NCBIfam" id="NF001924">
    <property type="entry name" value="PRK00702.1"/>
    <property type="match status" value="1"/>
</dbReference>
<dbReference type="NCBIfam" id="TIGR00021">
    <property type="entry name" value="rpiA"/>
    <property type="match status" value="1"/>
</dbReference>
<dbReference type="PANTHER" id="PTHR11934">
    <property type="entry name" value="RIBOSE-5-PHOSPHATE ISOMERASE"/>
    <property type="match status" value="1"/>
</dbReference>
<dbReference type="PANTHER" id="PTHR11934:SF0">
    <property type="entry name" value="RIBOSE-5-PHOSPHATE ISOMERASE"/>
    <property type="match status" value="1"/>
</dbReference>
<dbReference type="Pfam" id="PF06026">
    <property type="entry name" value="Rib_5-P_isom_A"/>
    <property type="match status" value="1"/>
</dbReference>
<dbReference type="SUPFAM" id="SSF75445">
    <property type="entry name" value="D-ribose-5-phosphate isomerase (RpiA), lid domain"/>
    <property type="match status" value="1"/>
</dbReference>
<dbReference type="SUPFAM" id="SSF100950">
    <property type="entry name" value="NagB/RpiA/CoA transferase-like"/>
    <property type="match status" value="1"/>
</dbReference>
<comment type="function">
    <text evidence="1">Catalyzes the reversible conversion of ribose-5-phosphate to ribulose 5-phosphate.</text>
</comment>
<comment type="catalytic activity">
    <reaction evidence="1">
        <text>aldehydo-D-ribose 5-phosphate = D-ribulose 5-phosphate</text>
        <dbReference type="Rhea" id="RHEA:14657"/>
        <dbReference type="ChEBI" id="CHEBI:58121"/>
        <dbReference type="ChEBI" id="CHEBI:58273"/>
        <dbReference type="EC" id="5.3.1.6"/>
    </reaction>
</comment>
<comment type="pathway">
    <text evidence="1">Carbohydrate degradation; pentose phosphate pathway; D-ribose 5-phosphate from D-ribulose 5-phosphate (non-oxidative stage): step 1/1.</text>
</comment>
<comment type="subunit">
    <text evidence="1">Homodimer.</text>
</comment>
<comment type="similarity">
    <text evidence="1">Belongs to the ribose 5-phosphate isomerase family.</text>
</comment>
<evidence type="ECO:0000255" key="1">
    <source>
        <dbReference type="HAMAP-Rule" id="MF_00170"/>
    </source>
</evidence>
<name>RPIA_CUPPJ</name>
<proteinExistence type="inferred from homology"/>
<accession>Q46ZK1</accession>
<protein>
    <recommendedName>
        <fullName evidence="1">Ribose-5-phosphate isomerase A</fullName>
        <ecNumber evidence="1">5.3.1.6</ecNumber>
    </recommendedName>
    <alternativeName>
        <fullName evidence="1">Phosphoriboisomerase A</fullName>
        <shortName evidence="1">PRI</shortName>
    </alternativeName>
</protein>